<keyword id="KW-0325">Glycoprotein</keyword>
<keyword id="KW-0945">Host-virus interaction</keyword>
<keyword id="KW-0472">Membrane</keyword>
<keyword id="KW-1185">Reference proteome</keyword>
<keyword id="KW-0732">Signal</keyword>
<keyword id="KW-0812">Transmembrane</keyword>
<keyword id="KW-1133">Transmembrane helix</keyword>
<keyword id="KW-1161">Viral attachment to host cell</keyword>
<keyword id="KW-0261">Viral envelope protein</keyword>
<keyword id="KW-0946">Virion</keyword>
<keyword id="KW-1160">Virus entry into host cell</keyword>
<comment type="function">
    <text evidence="1">Attaches the virus to host cellular receptor, inducing endocytosis of the virion. In the endosome, the acidic pH induces conformational changes in the glycoprotein trimer, which trigger fusion between virus and cell membrane (By similarity).</text>
</comment>
<comment type="subunit">
    <text evidence="1">Homotrimer. Interacts with matrix protein (By similarity).</text>
</comment>
<comment type="subcellular location">
    <subcellularLocation>
        <location evidence="1">Virion membrane</location>
        <topology evidence="1">Single-pass type I membrane protein</topology>
    </subcellularLocation>
</comment>
<comment type="PTM">
    <text evidence="1">Glycosylated by host. Glycosylation is crucial for glycoprotein export at the cell surface (By similarity).</text>
</comment>
<comment type="similarity">
    <text evidence="3">Belongs to the nucleorhabdovirus glycoprotein family.</text>
</comment>
<accession>O10236</accession>
<organismHost>
    <name type="scientific">Oryza sativa</name>
    <name type="common">Rice</name>
    <dbReference type="NCBI Taxonomy" id="4530"/>
</organismHost>
<feature type="signal peptide" evidence="2">
    <location>
        <begin position="1"/>
        <end position="24"/>
    </location>
</feature>
<feature type="chain" id="PRO_0000299236" description="Glycoprotein">
    <location>
        <begin position="25"/>
        <end position="669"/>
    </location>
</feature>
<feature type="topological domain" description="Virion surface" evidence="2">
    <location>
        <begin position="25"/>
        <end position="609"/>
    </location>
</feature>
<feature type="transmembrane region" description="Helical" evidence="2">
    <location>
        <begin position="610"/>
        <end position="630"/>
    </location>
</feature>
<feature type="topological domain" description="Intravirion" evidence="2">
    <location>
        <begin position="631"/>
        <end position="669"/>
    </location>
</feature>
<protein>
    <recommendedName>
        <fullName>Glycoprotein</fullName>
    </recommendedName>
</protein>
<sequence length="669" mass="75552">MNIIKRAGVFIGLVYFTVLLIIYGEHIVRSYATEDCMPAGLYYYAEGAAYTNLPVCKDEPKSSYKGTELFPTSPNIDKPLRMTTDIMVHPISSTSDLGPMDVPPDMYPMYSCPNLSNSSPLPLWYGSCINSCQITSSKETMAVTVWAINSTVDIIMGYKLTTFFETKFSHVGPFGGCSISLVGSEPRSAPEALISGWRSKILSQGNIQDAAWYLYNDPECNYFSDIYSSGFFVRIDRIKLTVLIDAVGNLYLSDLVAGSYDSYDKGFATHGNNVWIWDTDRVKVDNNCYFKQTDDTYCDYDNTTGYILCKTIGVSFRSELQTRVESPCAGHLNISTDGVIYRLEGTADTPSTQDRLSSILKNNVNLGMESLISLINDVFTNIESSYCTGMCDLMEVILSNYPTATTVLETPIGPWLPITTNGHTVMTACSSDPNWVIKTPVSYCYSKKMIKVVNKDTMREAWWRIVNSYIILNETCTDENTTSFNLVKERMELRQDITYSFWRGDLIVSYPYNKSRWITYKDEKIQRSSKWFDKLLPLRYNHPITLDNITMELINHTRDIYDVHVYPSQGSTSKRPMSDVIGRVGAAGSNLIKHLVKGIGETFFWVTQHIELICDILIIIVCVVIGYCVVLKPILYITMRGREKQQPVIVMRDEGRSHLFSRSTATNAL</sequence>
<reference key="1">
    <citation type="journal article" date="2003" name="J. Gen. Virol.">
        <title>Novel structure of the genome of Rice yellow stunt virus: identification of the gene 6-encoded virion protein.</title>
        <authorList>
            <person name="Huang Y."/>
            <person name="Zhao H."/>
            <person name="Luo Z."/>
            <person name="Chen X."/>
            <person name="Fang R.X."/>
        </authorList>
    </citation>
    <scope>NUCLEOTIDE SEQUENCE [GENOMIC RNA]</scope>
</reference>
<name>GLYCO_RYSV</name>
<proteinExistence type="inferred from homology"/>
<organism>
    <name type="scientific">Rice yellow stunt virus</name>
    <name type="common">RYSV</name>
    <name type="synonym">Rice transitory yellowing virus</name>
    <dbReference type="NCBI Taxonomy" id="59380"/>
    <lineage>
        <taxon>Viruses</taxon>
        <taxon>Riboviria</taxon>
        <taxon>Orthornavirae</taxon>
        <taxon>Negarnaviricota</taxon>
        <taxon>Haploviricotina</taxon>
        <taxon>Monjiviricetes</taxon>
        <taxon>Mononegavirales</taxon>
        <taxon>Rhabdoviridae</taxon>
        <taxon>Betarhabdovirinae</taxon>
        <taxon>Alphanucleorhabdovirus</taxon>
        <taxon>Alphanucleorhabdovirus oryzae</taxon>
    </lineage>
</organism>
<dbReference type="EMBL" id="AB011257">
    <property type="protein sequence ID" value="BAA25158.1"/>
    <property type="molecule type" value="Genomic_RNA"/>
</dbReference>
<dbReference type="RefSeq" id="NP_620500.1">
    <property type="nucleotide sequence ID" value="NC_003746.1"/>
</dbReference>
<dbReference type="GeneID" id="944309"/>
<dbReference type="KEGG" id="vg:944309"/>
<dbReference type="OrthoDB" id="4323at10239"/>
<dbReference type="Proteomes" id="UP000002325">
    <property type="component" value="Genome"/>
</dbReference>
<dbReference type="GO" id="GO:0016020">
    <property type="term" value="C:membrane"/>
    <property type="evidence" value="ECO:0007669"/>
    <property type="project" value="UniProtKB-KW"/>
</dbReference>
<dbReference type="GO" id="GO:0019031">
    <property type="term" value="C:viral envelope"/>
    <property type="evidence" value="ECO:0007669"/>
    <property type="project" value="UniProtKB-KW"/>
</dbReference>
<dbReference type="GO" id="GO:0055036">
    <property type="term" value="C:virion membrane"/>
    <property type="evidence" value="ECO:0007669"/>
    <property type="project" value="UniProtKB-SubCell"/>
</dbReference>
<dbReference type="GO" id="GO:0046718">
    <property type="term" value="P:symbiont entry into host cell"/>
    <property type="evidence" value="ECO:0007669"/>
    <property type="project" value="UniProtKB-KW"/>
</dbReference>
<dbReference type="GO" id="GO:0019062">
    <property type="term" value="P:virion attachment to host cell"/>
    <property type="evidence" value="ECO:0007669"/>
    <property type="project" value="UniProtKB-KW"/>
</dbReference>
<evidence type="ECO:0000250" key="1"/>
<evidence type="ECO:0000255" key="2"/>
<evidence type="ECO:0000305" key="3"/>
<gene>
    <name type="primary">G</name>
</gene>